<proteinExistence type="inferred from homology"/>
<keyword id="KW-0046">Antibiotic resistance</keyword>
<keyword id="KW-1003">Cell membrane</keyword>
<keyword id="KW-0133">Cell shape</keyword>
<keyword id="KW-0961">Cell wall biogenesis/degradation</keyword>
<keyword id="KW-0378">Hydrolase</keyword>
<keyword id="KW-0472">Membrane</keyword>
<keyword id="KW-0573">Peptidoglycan synthesis</keyword>
<keyword id="KW-1185">Reference proteome</keyword>
<keyword id="KW-0812">Transmembrane</keyword>
<keyword id="KW-1133">Transmembrane helix</keyword>
<accession>Q1LSL8</accession>
<gene>
    <name evidence="1" type="primary">uppP</name>
    <name type="ordered locus">BCI_0621</name>
</gene>
<sequence length="275" mass="31090">MVDIYGLVVALILGIVEGLTEFLPVSSTGHMILVSYMLGFNNDKTKIFEVLIQLGSILAVIIICKQRWFLLFGLNLKKWEIYQHNINHGSRLHLYHIILGLIPSSILGLMFYEQIKSFFEPKYVMYSLILGSLLLLISQLIHDKKPRATCIDDISYLQAFLIGCFQCFALLPGFSRSGATISGGMLVGVSSDAAFEFSFLLAVPMIFGATILDLYRHLPVLSLDDIPMFIIGFITAFLVALITIKLFWRIIKGMSFIPFVLYRFLLVIVFYLILI</sequence>
<name>UPPP_BAUCH</name>
<dbReference type="EC" id="3.6.1.27" evidence="1"/>
<dbReference type="EMBL" id="CP000238">
    <property type="protein sequence ID" value="ABF13789.1"/>
    <property type="molecule type" value="Genomic_DNA"/>
</dbReference>
<dbReference type="RefSeq" id="WP_011520779.1">
    <property type="nucleotide sequence ID" value="NC_007984.1"/>
</dbReference>
<dbReference type="SMR" id="Q1LSL8"/>
<dbReference type="STRING" id="374463.BCI_0621"/>
<dbReference type="KEGG" id="bci:BCI_0621"/>
<dbReference type="HOGENOM" id="CLU_060296_2_0_6"/>
<dbReference type="OrthoDB" id="9808289at2"/>
<dbReference type="Proteomes" id="UP000002427">
    <property type="component" value="Chromosome"/>
</dbReference>
<dbReference type="GO" id="GO:0005886">
    <property type="term" value="C:plasma membrane"/>
    <property type="evidence" value="ECO:0007669"/>
    <property type="project" value="UniProtKB-SubCell"/>
</dbReference>
<dbReference type="GO" id="GO:0050380">
    <property type="term" value="F:undecaprenyl-diphosphatase activity"/>
    <property type="evidence" value="ECO:0007669"/>
    <property type="project" value="UniProtKB-UniRule"/>
</dbReference>
<dbReference type="GO" id="GO:0071555">
    <property type="term" value="P:cell wall organization"/>
    <property type="evidence" value="ECO:0007669"/>
    <property type="project" value="UniProtKB-KW"/>
</dbReference>
<dbReference type="GO" id="GO:0009252">
    <property type="term" value="P:peptidoglycan biosynthetic process"/>
    <property type="evidence" value="ECO:0007669"/>
    <property type="project" value="UniProtKB-KW"/>
</dbReference>
<dbReference type="GO" id="GO:0008360">
    <property type="term" value="P:regulation of cell shape"/>
    <property type="evidence" value="ECO:0007669"/>
    <property type="project" value="UniProtKB-KW"/>
</dbReference>
<dbReference type="GO" id="GO:0046677">
    <property type="term" value="P:response to antibiotic"/>
    <property type="evidence" value="ECO:0007669"/>
    <property type="project" value="UniProtKB-UniRule"/>
</dbReference>
<dbReference type="HAMAP" id="MF_01006">
    <property type="entry name" value="Undec_diphosphatase"/>
    <property type="match status" value="1"/>
</dbReference>
<dbReference type="InterPro" id="IPR003824">
    <property type="entry name" value="UppP"/>
</dbReference>
<dbReference type="NCBIfam" id="NF001388">
    <property type="entry name" value="PRK00281.1-1"/>
    <property type="match status" value="1"/>
</dbReference>
<dbReference type="NCBIfam" id="NF001390">
    <property type="entry name" value="PRK00281.1-4"/>
    <property type="match status" value="1"/>
</dbReference>
<dbReference type="NCBIfam" id="TIGR00753">
    <property type="entry name" value="undec_PP_bacA"/>
    <property type="match status" value="1"/>
</dbReference>
<dbReference type="PANTHER" id="PTHR30622">
    <property type="entry name" value="UNDECAPRENYL-DIPHOSPHATASE"/>
    <property type="match status" value="1"/>
</dbReference>
<dbReference type="PANTHER" id="PTHR30622:SF3">
    <property type="entry name" value="UNDECAPRENYL-DIPHOSPHATASE"/>
    <property type="match status" value="1"/>
</dbReference>
<dbReference type="Pfam" id="PF02673">
    <property type="entry name" value="BacA"/>
    <property type="match status" value="1"/>
</dbReference>
<reference key="1">
    <citation type="journal article" date="2006" name="PLoS Biol.">
        <title>Metabolic complementarity and genomics of the dual bacterial symbiosis of sharpshooters.</title>
        <authorList>
            <person name="Wu D."/>
            <person name="Daugherty S.C."/>
            <person name="Van Aken S.E."/>
            <person name="Pai G.H."/>
            <person name="Watkins K.L."/>
            <person name="Khouri H."/>
            <person name="Tallon L.J."/>
            <person name="Zaborsky J.M."/>
            <person name="Dunbar H.E."/>
            <person name="Tran P.L."/>
            <person name="Moran N.A."/>
            <person name="Eisen J.A."/>
        </authorList>
    </citation>
    <scope>NUCLEOTIDE SEQUENCE [LARGE SCALE GENOMIC DNA]</scope>
</reference>
<comment type="function">
    <text evidence="1">Catalyzes the dephosphorylation of undecaprenyl diphosphate (UPP). Confers resistance to bacitracin.</text>
</comment>
<comment type="catalytic activity">
    <reaction evidence="1">
        <text>di-trans,octa-cis-undecaprenyl diphosphate + H2O = di-trans,octa-cis-undecaprenyl phosphate + phosphate + H(+)</text>
        <dbReference type="Rhea" id="RHEA:28094"/>
        <dbReference type="ChEBI" id="CHEBI:15377"/>
        <dbReference type="ChEBI" id="CHEBI:15378"/>
        <dbReference type="ChEBI" id="CHEBI:43474"/>
        <dbReference type="ChEBI" id="CHEBI:58405"/>
        <dbReference type="ChEBI" id="CHEBI:60392"/>
        <dbReference type="EC" id="3.6.1.27"/>
    </reaction>
</comment>
<comment type="subcellular location">
    <subcellularLocation>
        <location evidence="1">Cell membrane</location>
        <topology evidence="1">Multi-pass membrane protein</topology>
    </subcellularLocation>
</comment>
<comment type="miscellaneous">
    <text>Bacitracin is thought to be involved in the inhibition of peptidoglycan synthesis by sequestering undecaprenyl diphosphate, thereby reducing the pool of lipid carrier available.</text>
</comment>
<comment type="similarity">
    <text evidence="1">Belongs to the UppP family.</text>
</comment>
<protein>
    <recommendedName>
        <fullName evidence="1">Undecaprenyl-diphosphatase</fullName>
        <ecNumber evidence="1">3.6.1.27</ecNumber>
    </recommendedName>
    <alternativeName>
        <fullName evidence="1">Bacitracin resistance protein</fullName>
    </alternativeName>
    <alternativeName>
        <fullName evidence="1">Undecaprenyl pyrophosphate phosphatase</fullName>
    </alternativeName>
</protein>
<feature type="chain" id="PRO_0000250225" description="Undecaprenyl-diphosphatase">
    <location>
        <begin position="1"/>
        <end position="275"/>
    </location>
</feature>
<feature type="transmembrane region" description="Helical" evidence="1">
    <location>
        <begin position="4"/>
        <end position="24"/>
    </location>
</feature>
<feature type="transmembrane region" description="Helical" evidence="1">
    <location>
        <begin position="54"/>
        <end position="74"/>
    </location>
</feature>
<feature type="transmembrane region" description="Helical" evidence="1">
    <location>
        <begin position="92"/>
        <end position="112"/>
    </location>
</feature>
<feature type="transmembrane region" description="Helical" evidence="1">
    <location>
        <begin position="123"/>
        <end position="143"/>
    </location>
</feature>
<feature type="transmembrane region" description="Helical" evidence="1">
    <location>
        <begin position="154"/>
        <end position="174"/>
    </location>
</feature>
<feature type="transmembrane region" description="Helical" evidence="1">
    <location>
        <begin position="194"/>
        <end position="214"/>
    </location>
</feature>
<feature type="transmembrane region" description="Helical" evidence="1">
    <location>
        <begin position="228"/>
        <end position="248"/>
    </location>
</feature>
<feature type="transmembrane region" description="Helical" evidence="1">
    <location>
        <begin position="255"/>
        <end position="275"/>
    </location>
</feature>
<organism>
    <name type="scientific">Baumannia cicadellinicola subsp. Homalodisca coagulata</name>
    <dbReference type="NCBI Taxonomy" id="374463"/>
    <lineage>
        <taxon>Bacteria</taxon>
        <taxon>Pseudomonadati</taxon>
        <taxon>Pseudomonadota</taxon>
        <taxon>Gammaproteobacteria</taxon>
        <taxon>Candidatus Palibaumannia</taxon>
    </lineage>
</organism>
<evidence type="ECO:0000255" key="1">
    <source>
        <dbReference type="HAMAP-Rule" id="MF_01006"/>
    </source>
</evidence>